<evidence type="ECO:0000255" key="1">
    <source>
        <dbReference type="HAMAP-Rule" id="MF_00144"/>
    </source>
</evidence>
<reference key="1">
    <citation type="submission" date="2007-06" db="EMBL/GenBank/DDBJ databases">
        <title>Complete sequence of chromosome of Staphylococcus aureus subsp. aureus JH1.</title>
        <authorList>
            <consortium name="US DOE Joint Genome Institute"/>
            <person name="Copeland A."/>
            <person name="Lucas S."/>
            <person name="Lapidus A."/>
            <person name="Barry K."/>
            <person name="Detter J.C."/>
            <person name="Glavina del Rio T."/>
            <person name="Hammon N."/>
            <person name="Israni S."/>
            <person name="Dalin E."/>
            <person name="Tice H."/>
            <person name="Pitluck S."/>
            <person name="Chain P."/>
            <person name="Malfatti S."/>
            <person name="Shin M."/>
            <person name="Vergez L."/>
            <person name="Schmutz J."/>
            <person name="Larimer F."/>
            <person name="Land M."/>
            <person name="Hauser L."/>
            <person name="Kyrpides N."/>
            <person name="Ivanova N."/>
            <person name="Tomasz A."/>
            <person name="Richardson P."/>
        </authorList>
    </citation>
    <scope>NUCLEOTIDE SEQUENCE [LARGE SCALE GENOMIC DNA]</scope>
    <source>
        <strain>JH1</strain>
    </source>
</reference>
<feature type="chain" id="PRO_1000076572" description="tRNA-specific 2-thiouridylase MnmA">
    <location>
        <begin position="1"/>
        <end position="372"/>
    </location>
</feature>
<feature type="region of interest" description="Interaction with target base in tRNA" evidence="1">
    <location>
        <begin position="97"/>
        <end position="99"/>
    </location>
</feature>
<feature type="region of interest" description="Interaction with tRNA" evidence="1">
    <location>
        <begin position="149"/>
        <end position="151"/>
    </location>
</feature>
<feature type="region of interest" description="Interaction with tRNA" evidence="1">
    <location>
        <begin position="309"/>
        <end position="310"/>
    </location>
</feature>
<feature type="active site" description="Nucleophile" evidence="1">
    <location>
        <position position="102"/>
    </location>
</feature>
<feature type="active site" description="Cysteine persulfide intermediate" evidence="1">
    <location>
        <position position="199"/>
    </location>
</feature>
<feature type="binding site" evidence="1">
    <location>
        <begin position="11"/>
        <end position="18"/>
    </location>
    <ligand>
        <name>ATP</name>
        <dbReference type="ChEBI" id="CHEBI:30616"/>
    </ligand>
</feature>
<feature type="binding site" evidence="1">
    <location>
        <position position="37"/>
    </location>
    <ligand>
        <name>ATP</name>
        <dbReference type="ChEBI" id="CHEBI:30616"/>
    </ligand>
</feature>
<feature type="binding site" evidence="1">
    <location>
        <position position="126"/>
    </location>
    <ligand>
        <name>ATP</name>
        <dbReference type="ChEBI" id="CHEBI:30616"/>
    </ligand>
</feature>
<feature type="site" description="Interaction with tRNA" evidence="1">
    <location>
        <position position="127"/>
    </location>
</feature>
<feature type="site" description="Interaction with tRNA" evidence="1">
    <location>
        <position position="342"/>
    </location>
</feature>
<feature type="disulfide bond" description="Alternate" evidence="1">
    <location>
        <begin position="102"/>
        <end position="199"/>
    </location>
</feature>
<protein>
    <recommendedName>
        <fullName evidence="1">tRNA-specific 2-thiouridylase MnmA</fullName>
        <ecNumber evidence="1">2.8.1.13</ecNumber>
    </recommendedName>
</protein>
<gene>
    <name evidence="1" type="primary">mnmA</name>
    <name type="synonym">trmU</name>
    <name type="ordered locus">SaurJH1_1712</name>
</gene>
<proteinExistence type="inferred from homology"/>
<organism>
    <name type="scientific">Staphylococcus aureus (strain JH1)</name>
    <dbReference type="NCBI Taxonomy" id="359787"/>
    <lineage>
        <taxon>Bacteria</taxon>
        <taxon>Bacillati</taxon>
        <taxon>Bacillota</taxon>
        <taxon>Bacilli</taxon>
        <taxon>Bacillales</taxon>
        <taxon>Staphylococcaceae</taxon>
        <taxon>Staphylococcus</taxon>
    </lineage>
</organism>
<dbReference type="EC" id="2.8.1.13" evidence="1"/>
<dbReference type="EMBL" id="CP000736">
    <property type="protein sequence ID" value="ABR52558.1"/>
    <property type="molecule type" value="Genomic_DNA"/>
</dbReference>
<dbReference type="SMR" id="A6U290"/>
<dbReference type="KEGG" id="sah:SaurJH1_1712"/>
<dbReference type="HOGENOM" id="CLU_035188_1_0_9"/>
<dbReference type="GO" id="GO:0005737">
    <property type="term" value="C:cytoplasm"/>
    <property type="evidence" value="ECO:0007669"/>
    <property type="project" value="UniProtKB-SubCell"/>
</dbReference>
<dbReference type="GO" id="GO:0005524">
    <property type="term" value="F:ATP binding"/>
    <property type="evidence" value="ECO:0007669"/>
    <property type="project" value="UniProtKB-KW"/>
</dbReference>
<dbReference type="GO" id="GO:0000049">
    <property type="term" value="F:tRNA binding"/>
    <property type="evidence" value="ECO:0007669"/>
    <property type="project" value="UniProtKB-KW"/>
</dbReference>
<dbReference type="GO" id="GO:0103016">
    <property type="term" value="F:tRNA-uridine 2-sulfurtransferase activity"/>
    <property type="evidence" value="ECO:0007669"/>
    <property type="project" value="UniProtKB-EC"/>
</dbReference>
<dbReference type="GO" id="GO:0002143">
    <property type="term" value="P:tRNA wobble position uridine thiolation"/>
    <property type="evidence" value="ECO:0007669"/>
    <property type="project" value="TreeGrafter"/>
</dbReference>
<dbReference type="CDD" id="cd01998">
    <property type="entry name" value="MnmA_TRMU-like"/>
    <property type="match status" value="1"/>
</dbReference>
<dbReference type="FunFam" id="2.30.30.280:FF:000001">
    <property type="entry name" value="tRNA-specific 2-thiouridylase MnmA"/>
    <property type="match status" value="1"/>
</dbReference>
<dbReference type="FunFam" id="2.40.30.10:FF:000023">
    <property type="entry name" value="tRNA-specific 2-thiouridylase MnmA"/>
    <property type="match status" value="1"/>
</dbReference>
<dbReference type="FunFam" id="3.40.50.620:FF:000004">
    <property type="entry name" value="tRNA-specific 2-thiouridylase MnmA"/>
    <property type="match status" value="1"/>
</dbReference>
<dbReference type="Gene3D" id="2.30.30.280">
    <property type="entry name" value="Adenine nucleotide alpha hydrolases-like domains"/>
    <property type="match status" value="1"/>
</dbReference>
<dbReference type="Gene3D" id="3.40.50.620">
    <property type="entry name" value="HUPs"/>
    <property type="match status" value="1"/>
</dbReference>
<dbReference type="Gene3D" id="2.40.30.10">
    <property type="entry name" value="Translation factors"/>
    <property type="match status" value="1"/>
</dbReference>
<dbReference type="HAMAP" id="MF_00144">
    <property type="entry name" value="tRNA_thiouridyl_MnmA"/>
    <property type="match status" value="1"/>
</dbReference>
<dbReference type="InterPro" id="IPR004506">
    <property type="entry name" value="MnmA-like"/>
</dbReference>
<dbReference type="InterPro" id="IPR046885">
    <property type="entry name" value="MnmA-like_C"/>
</dbReference>
<dbReference type="InterPro" id="IPR046884">
    <property type="entry name" value="MnmA-like_central"/>
</dbReference>
<dbReference type="InterPro" id="IPR023382">
    <property type="entry name" value="MnmA-like_central_sf"/>
</dbReference>
<dbReference type="InterPro" id="IPR014729">
    <property type="entry name" value="Rossmann-like_a/b/a_fold"/>
</dbReference>
<dbReference type="NCBIfam" id="NF001138">
    <property type="entry name" value="PRK00143.1"/>
    <property type="match status" value="1"/>
</dbReference>
<dbReference type="NCBIfam" id="TIGR00420">
    <property type="entry name" value="trmU"/>
    <property type="match status" value="1"/>
</dbReference>
<dbReference type="PANTHER" id="PTHR11933:SF5">
    <property type="entry name" value="MITOCHONDRIAL TRNA-SPECIFIC 2-THIOURIDYLASE 1"/>
    <property type="match status" value="1"/>
</dbReference>
<dbReference type="PANTHER" id="PTHR11933">
    <property type="entry name" value="TRNA 5-METHYLAMINOMETHYL-2-THIOURIDYLATE -METHYLTRANSFERASE"/>
    <property type="match status" value="1"/>
</dbReference>
<dbReference type="Pfam" id="PF03054">
    <property type="entry name" value="tRNA_Me_trans"/>
    <property type="match status" value="1"/>
</dbReference>
<dbReference type="Pfam" id="PF20258">
    <property type="entry name" value="tRNA_Me_trans_C"/>
    <property type="match status" value="1"/>
</dbReference>
<dbReference type="Pfam" id="PF20259">
    <property type="entry name" value="tRNA_Me_trans_M"/>
    <property type="match status" value="1"/>
</dbReference>
<dbReference type="SUPFAM" id="SSF52402">
    <property type="entry name" value="Adenine nucleotide alpha hydrolases-like"/>
    <property type="match status" value="1"/>
</dbReference>
<name>MNMA_STAA2</name>
<keyword id="KW-0067">ATP-binding</keyword>
<keyword id="KW-0963">Cytoplasm</keyword>
<keyword id="KW-1015">Disulfide bond</keyword>
<keyword id="KW-0547">Nucleotide-binding</keyword>
<keyword id="KW-0694">RNA-binding</keyword>
<keyword id="KW-0808">Transferase</keyword>
<keyword id="KW-0819">tRNA processing</keyword>
<keyword id="KW-0820">tRNA-binding</keyword>
<comment type="function">
    <text evidence="1">Catalyzes the 2-thiolation of uridine at the wobble position (U34) of tRNA, leading to the formation of s(2)U34.</text>
</comment>
<comment type="catalytic activity">
    <reaction evidence="1">
        <text>S-sulfanyl-L-cysteinyl-[protein] + uridine(34) in tRNA + AH2 + ATP = 2-thiouridine(34) in tRNA + L-cysteinyl-[protein] + A + AMP + diphosphate + H(+)</text>
        <dbReference type="Rhea" id="RHEA:47032"/>
        <dbReference type="Rhea" id="RHEA-COMP:10131"/>
        <dbReference type="Rhea" id="RHEA-COMP:11726"/>
        <dbReference type="Rhea" id="RHEA-COMP:11727"/>
        <dbReference type="Rhea" id="RHEA-COMP:11728"/>
        <dbReference type="ChEBI" id="CHEBI:13193"/>
        <dbReference type="ChEBI" id="CHEBI:15378"/>
        <dbReference type="ChEBI" id="CHEBI:17499"/>
        <dbReference type="ChEBI" id="CHEBI:29950"/>
        <dbReference type="ChEBI" id="CHEBI:30616"/>
        <dbReference type="ChEBI" id="CHEBI:33019"/>
        <dbReference type="ChEBI" id="CHEBI:61963"/>
        <dbReference type="ChEBI" id="CHEBI:65315"/>
        <dbReference type="ChEBI" id="CHEBI:87170"/>
        <dbReference type="ChEBI" id="CHEBI:456215"/>
        <dbReference type="EC" id="2.8.1.13"/>
    </reaction>
</comment>
<comment type="subcellular location">
    <subcellularLocation>
        <location evidence="1">Cytoplasm</location>
    </subcellularLocation>
</comment>
<comment type="similarity">
    <text evidence="1">Belongs to the MnmA/TRMU family.</text>
</comment>
<sequence>MSNKDIRVVVGMSGGVDSSVTAHVLKEQGYDVIGIFMKNWDDTDENGVCTATEDYNDVIEVCNQIGIPYYAVNFEKEYWDKVFTYFLDEYKKGRTPNPDVMCNKEIKFKAFLDHAMNLGADYVATGHYARIHRHEDGHVEMLRGVDNNKDQTYFLNQLSQQQLSKVMFPIGDIEKSEVRRIAEEQGLVTAKKKDSTGICFIGEKNFKTFLSQYLPAQPGDMITLDGKKMGKHSGLMYYTIGQRHGLGIGGDGDPWFVVGKNLKDNVLYVEQGFHHDALYSDYLIASDYSFVNPEDNDLDQGFECTAKFRYRQKDTKVFVKRENDHALRVTFAEPVRAITPGQAVVFYQGDVCLGGATIDDVFKNEGQLNYVV</sequence>
<accession>A6U290</accession>